<gene>
    <name evidence="12" type="primary">abaA</name>
    <name type="ORF">AN0422</name>
</gene>
<sequence length="796" mass="89171">MATDWQPECMVSQNQAALESIGAHSDRALQNTSGNVQAYSDSLAHHDTTGRDDPLQHYTLKYPHPPVPVPSHPLPTATANLYHPQLLSHRYQVKKLRRLQSNGSSYAGSRRGRSYLKSQKYLEYRARPRRDTGKDGEPVWSDELEDAFQQALEANPPMGRRKWSERGKSYGRNELIAEYIYKLTGKRRTRKQVSSHLQVLDSFLKGDPDWERLVREQSDRSTAQTQPVGPRWRTSMDHLPSSHYGTHATSSYPEPMRLMPPYSADLQLPQYSPTSTQQDTNNNTIQGLSFDMWVSAPNKPDRIDDAYHLYTRLQGDQRQPPMPLEDLKNWRVSFPHLSSSLSDVNDPLNCEIILLETNLELMDDFPPMGSRLGIHLELDIANPMSGTAPTVNQMENWTCSTYIYEDGRRTMEAYHNLTKPHTTKVKPPFESSWWAKTFTKLTQDKREAESTGHHHAADERTRRYFHSLTAVQEIRATVPPSLRRLQNHYPGSPAEESKRMAIILWKFRQTRPNEVGTTTWRKLITSPDRALTNSPRPSTAIDLPPLSLDSILLSKPTSNLYQAPPQHHDLLHQNAPSQQSWSLYQPSHDHVNSLYHSAGAFDFLNSITKPEEGLSDKTAPTSVLDPFPNLTQQTTSQTAGINVSSGTPVMLQIPDLSLSSNLGTYGLGHESHYVPSHHNAANLHDHSSTTGLGHYFAPSTQSLDEISHSHAPWSAPNTTISGDTSGGNYHHLPFTTSDHSVTVSRESHQNHSFEGLLPSDDLVGIVGGLSGDPNMNGAGPEHTSSAYAEHTAVEAV</sequence>
<dbReference type="EMBL" id="J04850">
    <property type="protein sequence ID" value="AAA33286.1"/>
    <property type="molecule type" value="Genomic_DNA"/>
</dbReference>
<dbReference type="EMBL" id="AACD01000007">
    <property type="protein sequence ID" value="EAA66521.1"/>
    <property type="molecule type" value="Genomic_DNA"/>
</dbReference>
<dbReference type="EMBL" id="BN001308">
    <property type="protein sequence ID" value="CBF89518.1"/>
    <property type="molecule type" value="Genomic_DNA"/>
</dbReference>
<dbReference type="PIR" id="A32434">
    <property type="entry name" value="A32434"/>
</dbReference>
<dbReference type="RefSeq" id="XP_658026.1">
    <property type="nucleotide sequence ID" value="XM_652934.1"/>
</dbReference>
<dbReference type="SMR" id="P20945"/>
<dbReference type="STRING" id="227321.P20945"/>
<dbReference type="EnsemblFungi" id="CBF89518">
    <property type="protein sequence ID" value="CBF89518"/>
    <property type="gene ID" value="ANIA_00422"/>
</dbReference>
<dbReference type="GeneID" id="2876199"/>
<dbReference type="KEGG" id="ani:ANIA_00422"/>
<dbReference type="VEuPathDB" id="FungiDB:AN0422"/>
<dbReference type="eggNOG" id="KOG3841">
    <property type="taxonomic scope" value="Eukaryota"/>
</dbReference>
<dbReference type="HOGENOM" id="CLU_356362_0_0_1"/>
<dbReference type="InParanoid" id="P20945"/>
<dbReference type="OMA" id="MWVSAPQ"/>
<dbReference type="OrthoDB" id="10006572at2759"/>
<dbReference type="Proteomes" id="UP000000560">
    <property type="component" value="Chromosome VIII"/>
</dbReference>
<dbReference type="GO" id="GO:0005634">
    <property type="term" value="C:nucleus"/>
    <property type="evidence" value="ECO:0007669"/>
    <property type="project" value="UniProtKB-SubCell"/>
</dbReference>
<dbReference type="GO" id="GO:0005667">
    <property type="term" value="C:transcription regulator complex"/>
    <property type="evidence" value="ECO:0000318"/>
    <property type="project" value="GO_Central"/>
</dbReference>
<dbReference type="GO" id="GO:0003700">
    <property type="term" value="F:DNA-binding transcription factor activity"/>
    <property type="evidence" value="ECO:0000314"/>
    <property type="project" value="AspGD"/>
</dbReference>
<dbReference type="GO" id="GO:0000981">
    <property type="term" value="F:DNA-binding transcription factor activity, RNA polymerase II-specific"/>
    <property type="evidence" value="ECO:0000318"/>
    <property type="project" value="GO_Central"/>
</dbReference>
<dbReference type="GO" id="GO:0000978">
    <property type="term" value="F:RNA polymerase II cis-regulatory region sequence-specific DNA binding"/>
    <property type="evidence" value="ECO:0000318"/>
    <property type="project" value="GO_Central"/>
</dbReference>
<dbReference type="GO" id="GO:0070787">
    <property type="term" value="P:conidiophore development"/>
    <property type="evidence" value="ECO:0000315"/>
    <property type="project" value="CACAO"/>
</dbReference>
<dbReference type="GO" id="GO:0048315">
    <property type="term" value="P:conidium formation"/>
    <property type="evidence" value="ECO:0000315"/>
    <property type="project" value="AspGD"/>
</dbReference>
<dbReference type="GO" id="GO:0070790">
    <property type="term" value="P:phialide development"/>
    <property type="evidence" value="ECO:0000315"/>
    <property type="project" value="AspGD"/>
</dbReference>
<dbReference type="GO" id="GO:0075307">
    <property type="term" value="P:positive regulation of conidium formation"/>
    <property type="evidence" value="ECO:0000315"/>
    <property type="project" value="AspGD"/>
</dbReference>
<dbReference type="GO" id="GO:0070807">
    <property type="term" value="P:positive regulation of phialide development"/>
    <property type="evidence" value="ECO:0000315"/>
    <property type="project" value="AspGD"/>
</dbReference>
<dbReference type="GO" id="GO:0006355">
    <property type="term" value="P:regulation of DNA-templated transcription"/>
    <property type="evidence" value="ECO:0000314"/>
    <property type="project" value="AspGD"/>
</dbReference>
<dbReference type="GO" id="GO:0006357">
    <property type="term" value="P:regulation of transcription by RNA polymerase II"/>
    <property type="evidence" value="ECO:0000315"/>
    <property type="project" value="AspGD"/>
</dbReference>
<dbReference type="GO" id="GO:0030435">
    <property type="term" value="P:sporulation resulting in formation of a cellular spore"/>
    <property type="evidence" value="ECO:0007669"/>
    <property type="project" value="UniProtKB-KW"/>
</dbReference>
<dbReference type="Gene3D" id="6.10.20.40">
    <property type="entry name" value="TEA/ATTS domain"/>
    <property type="match status" value="1"/>
</dbReference>
<dbReference type="InterPro" id="IPR000818">
    <property type="entry name" value="TEA/ATTS_dom"/>
</dbReference>
<dbReference type="InterPro" id="IPR038096">
    <property type="entry name" value="TEA/ATTS_sf"/>
</dbReference>
<dbReference type="InterPro" id="IPR050937">
    <property type="entry name" value="TEC1_TEAD_TF"/>
</dbReference>
<dbReference type="PANTHER" id="PTHR11834:SF0">
    <property type="entry name" value="PROTEIN SCALLOPED"/>
    <property type="match status" value="1"/>
</dbReference>
<dbReference type="PANTHER" id="PTHR11834">
    <property type="entry name" value="TRANSCRIPTIONAL ENHANCER FACTOR TEF RELATED"/>
    <property type="match status" value="1"/>
</dbReference>
<dbReference type="Pfam" id="PF01285">
    <property type="entry name" value="TEA"/>
    <property type="match status" value="1"/>
</dbReference>
<dbReference type="PRINTS" id="PR00065">
    <property type="entry name" value="TEADOMAIN"/>
</dbReference>
<dbReference type="SMART" id="SM00426">
    <property type="entry name" value="TEA"/>
    <property type="match status" value="1"/>
</dbReference>
<dbReference type="PROSITE" id="PS00554">
    <property type="entry name" value="TEA_1"/>
    <property type="match status" value="1"/>
</dbReference>
<dbReference type="PROSITE" id="PS51088">
    <property type="entry name" value="TEA_2"/>
    <property type="match status" value="1"/>
</dbReference>
<proteinExistence type="evidence at protein level"/>
<organism>
    <name type="scientific">Emericella nidulans (strain FGSC A4 / ATCC 38163 / CBS 112.46 / NRRL 194 / M139)</name>
    <name type="common">Aspergillus nidulans</name>
    <dbReference type="NCBI Taxonomy" id="227321"/>
    <lineage>
        <taxon>Eukaryota</taxon>
        <taxon>Fungi</taxon>
        <taxon>Dikarya</taxon>
        <taxon>Ascomycota</taxon>
        <taxon>Pezizomycotina</taxon>
        <taxon>Eurotiomycetes</taxon>
        <taxon>Eurotiomycetidae</taxon>
        <taxon>Eurotiales</taxon>
        <taxon>Aspergillaceae</taxon>
        <taxon>Aspergillus</taxon>
        <taxon>Aspergillus subgen. Nidulantes</taxon>
    </lineage>
</organism>
<name>ABAA_EMENI</name>
<reference key="1">
    <citation type="journal article" date="1989" name="Cell">
        <title>Interactions of three sequentially expressed genes control temporal and spatial specificity in Aspergillus development.</title>
        <authorList>
            <person name="Mirabito P.M."/>
            <person name="Adams T.H."/>
            <person name="Timberlake W.E."/>
        </authorList>
    </citation>
    <scope>NUCLEOTIDE SEQUENCE [GENOMIC DNA]</scope>
    <scope>DISRUPTION PHENOTYPE</scope>
    <scope>FUNCTION</scope>
    <source>
        <strain>FGSC 26</strain>
    </source>
</reference>
<reference key="2">
    <citation type="journal article" date="2005" name="Nature">
        <title>Sequencing of Aspergillus nidulans and comparative analysis with A. fumigatus and A. oryzae.</title>
        <authorList>
            <person name="Galagan J.E."/>
            <person name="Calvo S.E."/>
            <person name="Cuomo C."/>
            <person name="Ma L.-J."/>
            <person name="Wortman J.R."/>
            <person name="Batzoglou S."/>
            <person name="Lee S.-I."/>
            <person name="Bastuerkmen M."/>
            <person name="Spevak C.C."/>
            <person name="Clutterbuck J."/>
            <person name="Kapitonov V."/>
            <person name="Jurka J."/>
            <person name="Scazzocchio C."/>
            <person name="Farman M.L."/>
            <person name="Butler J."/>
            <person name="Purcell S."/>
            <person name="Harris S."/>
            <person name="Braus G.H."/>
            <person name="Draht O."/>
            <person name="Busch S."/>
            <person name="D'Enfert C."/>
            <person name="Bouchier C."/>
            <person name="Goldman G.H."/>
            <person name="Bell-Pedersen D."/>
            <person name="Griffiths-Jones S."/>
            <person name="Doonan J.H."/>
            <person name="Yu J."/>
            <person name="Vienken K."/>
            <person name="Pain A."/>
            <person name="Freitag M."/>
            <person name="Selker E.U."/>
            <person name="Archer D.B."/>
            <person name="Penalva M.A."/>
            <person name="Oakley B.R."/>
            <person name="Momany M."/>
            <person name="Tanaka T."/>
            <person name="Kumagai T."/>
            <person name="Asai K."/>
            <person name="Machida M."/>
            <person name="Nierman W.C."/>
            <person name="Denning D.W."/>
            <person name="Caddick M.X."/>
            <person name="Hynes M."/>
            <person name="Paoletti M."/>
            <person name="Fischer R."/>
            <person name="Miller B.L."/>
            <person name="Dyer P.S."/>
            <person name="Sachs M.S."/>
            <person name="Osmani S.A."/>
            <person name="Birren B.W."/>
        </authorList>
    </citation>
    <scope>NUCLEOTIDE SEQUENCE [LARGE SCALE GENOMIC DNA]</scope>
    <source>
        <strain>FGSC A4 / ATCC 38163 / CBS 112.46 / NRRL 194 / M139</strain>
    </source>
</reference>
<reference key="3">
    <citation type="journal article" date="2009" name="Fungal Genet. Biol.">
        <title>The 2008 update of the Aspergillus nidulans genome annotation: a community effort.</title>
        <authorList>
            <person name="Wortman J.R."/>
            <person name="Gilsenan J.M."/>
            <person name="Joardar V."/>
            <person name="Deegan J."/>
            <person name="Clutterbuck J."/>
            <person name="Andersen M.R."/>
            <person name="Archer D."/>
            <person name="Bencina M."/>
            <person name="Braus G."/>
            <person name="Coutinho P."/>
            <person name="von Dohren H."/>
            <person name="Doonan J."/>
            <person name="Driessen A.J."/>
            <person name="Durek P."/>
            <person name="Espeso E."/>
            <person name="Fekete E."/>
            <person name="Flipphi M."/>
            <person name="Estrada C.G."/>
            <person name="Geysens S."/>
            <person name="Goldman G."/>
            <person name="de Groot P.W."/>
            <person name="Hansen K."/>
            <person name="Harris S.D."/>
            <person name="Heinekamp T."/>
            <person name="Helmstaedt K."/>
            <person name="Henrissat B."/>
            <person name="Hofmann G."/>
            <person name="Homan T."/>
            <person name="Horio T."/>
            <person name="Horiuchi H."/>
            <person name="James S."/>
            <person name="Jones M."/>
            <person name="Karaffa L."/>
            <person name="Karanyi Z."/>
            <person name="Kato M."/>
            <person name="Keller N."/>
            <person name="Kelly D.E."/>
            <person name="Kiel J.A."/>
            <person name="Kim J.M."/>
            <person name="van der Klei I.J."/>
            <person name="Klis F.M."/>
            <person name="Kovalchuk A."/>
            <person name="Krasevec N."/>
            <person name="Kubicek C.P."/>
            <person name="Liu B."/>
            <person name="Maccabe A."/>
            <person name="Meyer V."/>
            <person name="Mirabito P."/>
            <person name="Miskei M."/>
            <person name="Mos M."/>
            <person name="Mullins J."/>
            <person name="Nelson D.R."/>
            <person name="Nielsen J."/>
            <person name="Oakley B.R."/>
            <person name="Osmani S.A."/>
            <person name="Pakula T."/>
            <person name="Paszewski A."/>
            <person name="Paulsen I."/>
            <person name="Pilsyk S."/>
            <person name="Pocsi I."/>
            <person name="Punt P.J."/>
            <person name="Ram A.F."/>
            <person name="Ren Q."/>
            <person name="Robellet X."/>
            <person name="Robson G."/>
            <person name="Seiboth B."/>
            <person name="van Solingen P."/>
            <person name="Specht T."/>
            <person name="Sun J."/>
            <person name="Taheri-Talesh N."/>
            <person name="Takeshita N."/>
            <person name="Ussery D."/>
            <person name="vanKuyk P.A."/>
            <person name="Visser H."/>
            <person name="van de Vondervoort P.J."/>
            <person name="de Vries R.P."/>
            <person name="Walton J."/>
            <person name="Xiang X."/>
            <person name="Xiong Y."/>
            <person name="Zeng A.P."/>
            <person name="Brandt B.W."/>
            <person name="Cornell M.J."/>
            <person name="van den Hondel C.A."/>
            <person name="Visser J."/>
            <person name="Oliver S.G."/>
            <person name="Turner G."/>
        </authorList>
    </citation>
    <scope>GENOME REANNOTATION</scope>
    <source>
        <strain>FGSC A4 / ATCC 38163 / CBS 112.46 / NRRL 194 / M139</strain>
    </source>
</reference>
<reference key="4">
    <citation type="journal article" date="1987" name="Mol. Cell. Biol.">
        <title>Isolation and physical characterization of three essential conidiation genes from Aspergillus nidulans.</title>
        <authorList>
            <person name="Boylan M.T."/>
            <person name="Mirabito P.M."/>
            <person name="Willett C.E."/>
            <person name="Zimmerman C.R."/>
            <person name="Timberlake W.E."/>
        </authorList>
    </citation>
    <scope>FUNCTION</scope>
    <scope>DISRUPTION PHENOTYPE</scope>
    <scope>INDUCTION</scope>
</reference>
<reference key="5">
    <citation type="journal article" date="1990" name="Mol. Cell. Biol.">
        <title>Upstream elements repress premature expression of an Aspergillus developmental regulatory gene.</title>
        <authorList>
            <person name="Adams T.H."/>
            <person name="Timberlake W.E."/>
        </authorList>
    </citation>
    <scope>INDUCTION</scope>
</reference>
<reference key="6">
    <citation type="journal article" date="1990" name="Plant Cell">
        <title>abaA controls phialide differentiation in Aspergillus nidulans.</title>
        <authorList>
            <person name="Sewall T.C."/>
            <person name="Mims C.W."/>
            <person name="Timberlake W.E."/>
        </authorList>
    </citation>
    <scope>FUNCTION</scope>
    <scope>DISRUPTION PHENOTYPE</scope>
</reference>
<reference key="7">
    <citation type="journal article" date="1990" name="Proc. Natl. Acad. Sci. U.S.A.">
        <title>Developmental repression of growth and gene expression in Aspergillus.</title>
        <authorList>
            <person name="Adams T.H."/>
            <person name="Timberlake W.E."/>
        </authorList>
    </citation>
    <scope>FUNCTION</scope>
</reference>
<reference key="8">
    <citation type="journal article" date="1991" name="Cell">
        <title>The TEA domain: a novel, highly conserved DNA-binding motif.</title>
        <authorList>
            <person name="Buerglin T.R."/>
        </authorList>
    </citation>
    <scope>DOMAIN TEA</scope>
</reference>
<reference key="9">
    <citation type="journal article" date="1994" name="Can. J. Microbiol.">
        <title>Cellular effects of misscheduled brlA, abaA, and wetA expression in Aspergillus nidulans.</title>
        <authorList>
            <person name="Sewall T.C."/>
        </authorList>
    </citation>
    <scope>FUNCTION</scope>
</reference>
<reference key="10">
    <citation type="journal article" date="1994" name="Mol. Cell. Biol.">
        <title>The Aspergillus nidulans abaA gene encodes a transcriptional activator that acts as a genetic switch to control development.</title>
        <authorList>
            <person name="Andrianopoulos A."/>
            <person name="Timberlake W.E."/>
        </authorList>
    </citation>
    <scope>FUNCTION</scope>
    <scope>DNA-BINDING</scope>
</reference>
<reference key="11">
    <citation type="journal article" date="2014" name="PLoS ONE">
        <title>VelC positively controls sexual development in Aspergillus nidulans.</title>
        <authorList>
            <person name="Park H.S."/>
            <person name="Nam T.Y."/>
            <person name="Han K.H."/>
            <person name="Kim S.C."/>
            <person name="Yu J.H."/>
        </authorList>
    </citation>
    <scope>INDUCTION</scope>
</reference>
<evidence type="ECO:0000250" key="1">
    <source>
        <dbReference type="UniProtKB" id="I1S4T3"/>
    </source>
</evidence>
<evidence type="ECO:0000255" key="2">
    <source>
        <dbReference type="PROSITE-ProRule" id="PRU00505"/>
    </source>
</evidence>
<evidence type="ECO:0000256" key="3">
    <source>
        <dbReference type="SAM" id="MobiDB-lite"/>
    </source>
</evidence>
<evidence type="ECO:0000269" key="4">
    <source>
    </source>
</evidence>
<evidence type="ECO:0000269" key="5">
    <source>
    </source>
</evidence>
<evidence type="ECO:0000269" key="6">
    <source>
    </source>
</evidence>
<evidence type="ECO:0000269" key="7">
    <source>
    </source>
</evidence>
<evidence type="ECO:0000269" key="8">
    <source>
    </source>
</evidence>
<evidence type="ECO:0000269" key="9">
    <source>
    </source>
</evidence>
<evidence type="ECO:0000269" key="10">
    <source>
    </source>
</evidence>
<evidence type="ECO:0000269" key="11">
    <source>
    </source>
</evidence>
<evidence type="ECO:0000303" key="12">
    <source>
    </source>
</evidence>
<evidence type="ECO:0000305" key="13"/>
<accession>P20945</accession>
<accession>C8VTG3</accession>
<accession>Q5BGA8</accession>
<comment type="function">
    <text evidence="5 6 8 9 10 11">BrlA, abaA and wetA are pivotal regulators of conidiophore development and conidium maturation (PubMed:2196567, PubMed:2655931). They act individually and together to regulate their own expression and that of numerous other sporulation-specific gene (PubMed:2655931, PubMed:2823119). Controls temporal and spatial specificity in Aspergillus development (PubMed:2655931, PubMed:7704830). Directs the differentiation of phialides and is continuously required for maintenance of their function (PubMed:2152124). Expression of abaA leads to activation of brlA and wetA, cessation of vegetative growth, and accentuated cellular vacuolization (PubMed:2655931). Binds to the sequence 5'-CATTCY-3', where Y is a pyrimidine, making both major- and minor-groove contacts (PubMed:8139553). Multiple abaA binding sites are present in the cis-acting regulatory regions of several developmentally controlled structural genes as well as those of the upstream regulatory gene brlA, the downstream regulatory gene wetA, and abaA itself (PubMed:8139553).</text>
</comment>
<comment type="subcellular location">
    <subcellularLocation>
        <location evidence="1">Nucleus</location>
    </subcellularLocation>
    <text evidence="1">localizes to the nuclei of phialides and terminal cells of mature conidia (By similarity).</text>
</comment>
<comment type="induction">
    <text evidence="4 7 9">Expression is induced during conidiation, after conidiophore vesicles, metullae, and phialides had formed (PubMed:2823119). Negatively regulated by velC (PubMed:24587098). In the promoter, a 45-base-pair region encompassing the major and minor abaA transcription initiation sites contains directly repeated sequences related to the mammalian initiator (Inr) element and is sufficient for correct transcription initiation and for developmental induction (PubMed:2117702).</text>
</comment>
<comment type="disruption phenotype">
    <text evidence="5 8 9">Prevents the formation of normal conidiophores (PubMed:2152124, PubMed:2823119). Fails to form any viable conidia, even though it does produce morphologically normal phialides (PubMed:2655931).</text>
</comment>
<comment type="similarity">
    <text evidence="13">Belongs to the TEC1 family.</text>
</comment>
<feature type="chain" id="PRO_0000205940" description="Conidiophore development regulator abaA">
    <location>
        <begin position="1"/>
        <end position="796"/>
    </location>
</feature>
<feature type="DNA-binding region" description="TEA" evidence="2">
    <location>
        <begin position="133"/>
        <end position="207"/>
    </location>
</feature>
<feature type="region of interest" description="Disordered" evidence="3">
    <location>
        <begin position="215"/>
        <end position="254"/>
    </location>
</feature>
<feature type="region of interest" description="Leucine-zipper-like">
    <location>
        <begin position="341"/>
        <end position="362"/>
    </location>
</feature>
<feature type="region of interest" description="Disordered" evidence="3">
    <location>
        <begin position="612"/>
        <end position="643"/>
    </location>
</feature>
<feature type="compositionally biased region" description="Polar residues" evidence="3">
    <location>
        <begin position="243"/>
        <end position="252"/>
    </location>
</feature>
<feature type="compositionally biased region" description="Polar residues" evidence="3">
    <location>
        <begin position="629"/>
        <end position="643"/>
    </location>
</feature>
<feature type="sequence conflict" description="In Ref. 1; AAA33286." evidence="13" ref="1">
    <original>T</original>
    <variation>I</variation>
    <location>
        <position position="631"/>
    </location>
</feature>
<feature type="sequence conflict" description="In Ref. 1; AAA33286." evidence="13" ref="1">
    <original>I</original>
    <variation>T</variation>
    <location>
        <position position="641"/>
    </location>
</feature>
<protein>
    <recommendedName>
        <fullName evidence="13">Conidiophore development regulator abaA</fullName>
    </recommendedName>
</protein>
<keyword id="KW-0010">Activator</keyword>
<keyword id="KW-0183">Conidiation</keyword>
<keyword id="KW-0238">DNA-binding</keyword>
<keyword id="KW-0539">Nucleus</keyword>
<keyword id="KW-1185">Reference proteome</keyword>
<keyword id="KW-0749">Sporulation</keyword>
<keyword id="KW-0804">Transcription</keyword>
<keyword id="KW-0805">Transcription regulation</keyword>